<accession>I6S3A0</accession>
<comment type="function">
    <text evidence="1">Inhibits voltage-gated potassium channels.</text>
</comment>
<comment type="subcellular location">
    <subcellularLocation>
        <location evidence="6">Secreted</location>
    </subcellularLocation>
</comment>
<comment type="tissue specificity">
    <text evidence="6">Expressed by the venom gland.</text>
</comment>
<comment type="similarity">
    <text evidence="5">Belongs to the scoloptoxin family.</text>
</comment>
<sequence length="73" mass="8738">MKSWMAILLVMALIIFTLDNCYSTDDKPIGKCGDRQRNKLCLVCQDRSQIDYYYTECCIYDQTYYMCLDMLRH</sequence>
<evidence type="ECO:0000250" key="1"/>
<evidence type="ECO:0000250" key="2">
    <source>
        <dbReference type="UniProtKB" id="I6RU32"/>
    </source>
</evidence>
<evidence type="ECO:0000255" key="3"/>
<evidence type="ECO:0000303" key="4">
    <source>
    </source>
</evidence>
<evidence type="ECO:0000305" key="5"/>
<evidence type="ECO:0000305" key="6">
    <source>
    </source>
</evidence>
<keyword id="KW-1015">Disulfide bond</keyword>
<keyword id="KW-0872">Ion channel impairing toxin</keyword>
<keyword id="KW-0528">Neurotoxin</keyword>
<keyword id="KW-0632">Potassium channel impairing toxin</keyword>
<keyword id="KW-0964">Secreted</keyword>
<keyword id="KW-0732">Signal</keyword>
<keyword id="KW-0800">Toxin</keyword>
<keyword id="KW-1220">Voltage-gated potassium channel impairing toxin</keyword>
<dbReference type="EMBL" id="JQ757070">
    <property type="protein sequence ID" value="AFM55017.1"/>
    <property type="molecule type" value="mRNA"/>
</dbReference>
<dbReference type="SMR" id="I6S3A0"/>
<dbReference type="TCDB" id="8.B.26.1.2">
    <property type="family name" value="the scorpion toxin, scoloptoxin (scoloptoxin) family"/>
</dbReference>
<dbReference type="GO" id="GO:0005576">
    <property type="term" value="C:extracellular region"/>
    <property type="evidence" value="ECO:0007669"/>
    <property type="project" value="UniProtKB-SubCell"/>
</dbReference>
<dbReference type="GO" id="GO:0015459">
    <property type="term" value="F:potassium channel regulator activity"/>
    <property type="evidence" value="ECO:0007669"/>
    <property type="project" value="UniProtKB-KW"/>
</dbReference>
<dbReference type="GO" id="GO:0090729">
    <property type="term" value="F:toxin activity"/>
    <property type="evidence" value="ECO:0007669"/>
    <property type="project" value="UniProtKB-KW"/>
</dbReference>
<dbReference type="Gene3D" id="1.10.60.50">
    <property type="match status" value="1"/>
</dbReference>
<feature type="signal peptide" evidence="3">
    <location>
        <begin position="1"/>
        <end position="23"/>
    </location>
</feature>
<feature type="chain" id="PRO_0000425471" description="Kappa-scoloptoxin(03)-Ssm1c" evidence="2">
    <location>
        <begin position="24"/>
        <end position="73"/>
    </location>
</feature>
<feature type="disulfide bond" evidence="2">
    <location>
        <begin position="32"/>
        <end position="58"/>
    </location>
</feature>
<feature type="disulfide bond" evidence="2">
    <location>
        <begin position="41"/>
        <end position="57"/>
    </location>
</feature>
<feature type="disulfide bond" evidence="2">
    <location>
        <begin position="44"/>
        <end position="67"/>
    </location>
</feature>
<reference key="1">
    <citation type="journal article" date="2012" name="Mol. Cell. Proteomics">
        <title>Chemical punch packed in venoms makes centipedes excellent predators.</title>
        <authorList>
            <person name="Yang S."/>
            <person name="Liu Z."/>
            <person name="Xiao Y."/>
            <person name="Li Y."/>
            <person name="Rong M."/>
            <person name="Liang S."/>
            <person name="Zhang Z."/>
            <person name="Yu H."/>
            <person name="King G.F."/>
            <person name="Lai R."/>
        </authorList>
    </citation>
    <scope>NUCLEOTIDE SEQUENCE [MRNA]</scope>
    <source>
        <tissue>Venom gland</tissue>
    </source>
</reference>
<protein>
    <recommendedName>
        <fullName evidence="2">Kappa-scoloptoxin(03)-Ssm1c</fullName>
        <shortName evidence="2">Kappa-SLPTX(03)-Ssm1c</shortName>
    </recommendedName>
    <alternativeName>
        <fullName evidence="4">Kappa-scoloptoxin-Ssm1c</fullName>
        <shortName evidence="4">Kappa-SLPTX-Ssm1c</shortName>
    </alternativeName>
</protein>
<organism>
    <name type="scientific">Scolopendra mutilans</name>
    <name type="common">Chinese red-headed centipede</name>
    <name type="synonym">Scolopendra subspinipes mutilans</name>
    <dbReference type="NCBI Taxonomy" id="2836329"/>
    <lineage>
        <taxon>Eukaryota</taxon>
        <taxon>Metazoa</taxon>
        <taxon>Ecdysozoa</taxon>
        <taxon>Arthropoda</taxon>
        <taxon>Myriapoda</taxon>
        <taxon>Chilopoda</taxon>
        <taxon>Pleurostigmophora</taxon>
        <taxon>Scolopendromorpha</taxon>
        <taxon>Scolopendridae</taxon>
        <taxon>Scolopendra</taxon>
    </lineage>
</organism>
<name>TX31C_SCOMU</name>
<proteinExistence type="inferred from homology"/>